<gene>
    <name type="primary">Bex2</name>
</gene>
<keyword id="KW-0053">Apoptosis</keyword>
<keyword id="KW-0131">Cell cycle</keyword>
<keyword id="KW-0963">Cytoplasm</keyword>
<keyword id="KW-0479">Metal-binding</keyword>
<keyword id="KW-0488">Methylation</keyword>
<keyword id="KW-0539">Nucleus</keyword>
<keyword id="KW-1185">Reference proteome</keyword>
<keyword id="KW-0862">Zinc</keyword>
<feature type="chain" id="PRO_0000229779" description="Protein BEX2">
    <location>
        <begin position="1"/>
        <end position="129"/>
    </location>
</feature>
<feature type="region of interest" description="Disordered" evidence="4">
    <location>
        <begin position="1"/>
        <end position="38"/>
    </location>
</feature>
<feature type="region of interest" description="Disordered" evidence="4">
    <location>
        <begin position="108"/>
        <end position="129"/>
    </location>
</feature>
<feature type="region of interest" description="His cluster" evidence="3">
    <location>
        <begin position="118"/>
        <end position="122"/>
    </location>
</feature>
<feature type="compositionally biased region" description="Basic and acidic residues" evidence="4">
    <location>
        <begin position="15"/>
        <end position="36"/>
    </location>
</feature>
<feature type="compositionally biased region" description="Basic and acidic residues" evidence="4">
    <location>
        <begin position="116"/>
        <end position="129"/>
    </location>
</feature>
<feature type="binding site" evidence="3">
    <location>
        <position position="126"/>
    </location>
    <ligand>
        <name>Zn(2+)</name>
        <dbReference type="ChEBI" id="CHEBI:29105"/>
        <note>ligand shared with FEM1B</note>
    </ligand>
</feature>
<feature type="modified residue" description="Omega-N-methylarginine" evidence="2">
    <location>
        <position position="51"/>
    </location>
</feature>
<feature type="mutagenesis site" description="Induces a redistribution from both the nucleus and cytoplasm to only the cytoplasm." evidence="5">
    <original>R</original>
    <variation>L</variation>
    <location>
        <position position="103"/>
    </location>
</feature>
<sequence length="129" mass="15541">MESKVEQGVKNLNMENDHQEKEEKEEKPQDANKREPVVALPFEAGEYYVPRGSRRRFRVRQPIAHYRWDLMHRVGEPQGRMREENVQRFGEDMRQLMEKLRERQLSHSLRAVSTDPPHHDHHDEFCLMP</sequence>
<reference key="1">
    <citation type="journal article" date="2005" name="Gene">
        <title>Characterization of the Bex gene family in humans, mice, and rats.</title>
        <authorList>
            <person name="Alvarez E."/>
            <person name="Zhou W."/>
            <person name="Witta S.E."/>
            <person name="Freed C.R."/>
        </authorList>
    </citation>
    <scope>NUCLEOTIDE SEQUENCE [MRNA]</scope>
    <scope>SUBCELLULAR LOCATION</scope>
    <scope>MUTAGENESIS OF ARG-103</scope>
    <source>
        <strain>Sprague-Dawley</strain>
    </source>
</reference>
<name>BEX2_RAT</name>
<proteinExistence type="evidence at protein level"/>
<accession>Q3MKQ1</accession>
<protein>
    <recommendedName>
        <fullName>Protein BEX2</fullName>
    </recommendedName>
    <alternativeName>
        <fullName>Brain-expressed X-linked protein 2 homolog</fullName>
    </alternativeName>
</protein>
<comment type="function">
    <text evidence="1 2">Regulator of mitochondrial apoptosis and G1 cell cycle. Regulates the level of PP2A regulatory subunit B and PP2A phosphatase activity (By similarity). In absence of reductive stress, acts as a pseudosubstrate for the CRL2(FEM1B) complex: associates with FEM1B via zinc, thereby preventing association between FEM1B and its substrates (By similarity).</text>
</comment>
<comment type="subunit">
    <text evidence="1 2">Interacts with LMO2, possibly leading to regulate the transcriptional activity of a DNA-binding complex containing LMO2 (By similarity). Interacts with OMP (By similarity).</text>
</comment>
<comment type="subcellular location">
    <subcellularLocation>
        <location evidence="5">Nucleus</location>
    </subcellularLocation>
    <subcellularLocation>
        <location evidence="5">Cytoplasm</location>
    </subcellularLocation>
</comment>
<comment type="domain">
    <text evidence="3">The histidine cluster (His cluster) and Cys-126 mediate zinc-binding.</text>
</comment>
<comment type="similarity">
    <text evidence="6">Belongs to the BEX family.</text>
</comment>
<evidence type="ECO:0000250" key="1">
    <source>
        <dbReference type="UniProtKB" id="Q9BXY8"/>
    </source>
</evidence>
<evidence type="ECO:0000250" key="2">
    <source>
        <dbReference type="UniProtKB" id="Q9WTZ8"/>
    </source>
</evidence>
<evidence type="ECO:0000250" key="3">
    <source>
        <dbReference type="UniProtKB" id="Q9WTZ9"/>
    </source>
</evidence>
<evidence type="ECO:0000256" key="4">
    <source>
        <dbReference type="SAM" id="MobiDB-lite"/>
    </source>
</evidence>
<evidence type="ECO:0000269" key="5">
    <source>
    </source>
</evidence>
<evidence type="ECO:0000305" key="6"/>
<organism>
    <name type="scientific">Rattus norvegicus</name>
    <name type="common">Rat</name>
    <dbReference type="NCBI Taxonomy" id="10116"/>
    <lineage>
        <taxon>Eukaryota</taxon>
        <taxon>Metazoa</taxon>
        <taxon>Chordata</taxon>
        <taxon>Craniata</taxon>
        <taxon>Vertebrata</taxon>
        <taxon>Euteleostomi</taxon>
        <taxon>Mammalia</taxon>
        <taxon>Eutheria</taxon>
        <taxon>Euarchontoglires</taxon>
        <taxon>Glires</taxon>
        <taxon>Rodentia</taxon>
        <taxon>Myomorpha</taxon>
        <taxon>Muroidea</taxon>
        <taxon>Muridae</taxon>
        <taxon>Murinae</taxon>
        <taxon>Rattus</taxon>
    </lineage>
</organism>
<dbReference type="EMBL" id="AY833555">
    <property type="protein sequence ID" value="AAX40673.1"/>
    <property type="molecule type" value="mRNA"/>
</dbReference>
<dbReference type="RefSeq" id="NP_001070903.1">
    <property type="nucleotide sequence ID" value="NM_001077435.1"/>
</dbReference>
<dbReference type="FunCoup" id="Q3MKQ1">
    <property type="interactions" value="37"/>
</dbReference>
<dbReference type="STRING" id="10116.ENSRNOP00000041688"/>
<dbReference type="PhosphoSitePlus" id="Q3MKQ1"/>
<dbReference type="jPOST" id="Q3MKQ1"/>
<dbReference type="PaxDb" id="10116-ENSRNOP00000041688"/>
<dbReference type="Ensembl" id="ENSRNOT00000042126.4">
    <property type="protein sequence ID" value="ENSRNOP00000041688.3"/>
    <property type="gene ID" value="ENSRNOG00000032729.4"/>
</dbReference>
<dbReference type="GeneID" id="363498"/>
<dbReference type="KEGG" id="rno:363498"/>
<dbReference type="UCSC" id="RGD:1564466">
    <property type="organism name" value="rat"/>
</dbReference>
<dbReference type="AGR" id="RGD:1564466"/>
<dbReference type="CTD" id="84707"/>
<dbReference type="RGD" id="1564466">
    <property type="gene designation" value="Bex2"/>
</dbReference>
<dbReference type="eggNOG" id="ENOG502RW3Y">
    <property type="taxonomic scope" value="Eukaryota"/>
</dbReference>
<dbReference type="GeneTree" id="ENSGT00940000153412"/>
<dbReference type="HOGENOM" id="CLU_123122_1_0_1"/>
<dbReference type="InParanoid" id="Q3MKQ1"/>
<dbReference type="OMA" id="PPYHEHH"/>
<dbReference type="OrthoDB" id="9833968at2759"/>
<dbReference type="PhylomeDB" id="Q3MKQ1"/>
<dbReference type="TreeFam" id="TF337909"/>
<dbReference type="PRO" id="PR:Q3MKQ1"/>
<dbReference type="Proteomes" id="UP000002494">
    <property type="component" value="Chromosome X"/>
</dbReference>
<dbReference type="Bgee" id="ENSRNOG00000032729">
    <property type="expression patterns" value="Expressed in cerebellum and 13 other cell types or tissues"/>
</dbReference>
<dbReference type="GO" id="GO:0005737">
    <property type="term" value="C:cytoplasm"/>
    <property type="evidence" value="ECO:0000314"/>
    <property type="project" value="MGI"/>
</dbReference>
<dbReference type="GO" id="GO:0005634">
    <property type="term" value="C:nucleus"/>
    <property type="evidence" value="ECO:0000314"/>
    <property type="project" value="MGI"/>
</dbReference>
<dbReference type="GO" id="GO:0005667">
    <property type="term" value="C:transcription regulator complex"/>
    <property type="evidence" value="ECO:0000266"/>
    <property type="project" value="RGD"/>
</dbReference>
<dbReference type="GO" id="GO:0046872">
    <property type="term" value="F:metal ion binding"/>
    <property type="evidence" value="ECO:0007669"/>
    <property type="project" value="UniProtKB-KW"/>
</dbReference>
<dbReference type="GO" id="GO:0140678">
    <property type="term" value="F:molecular function inhibitor activity"/>
    <property type="evidence" value="ECO:0000250"/>
    <property type="project" value="UniProtKB"/>
</dbReference>
<dbReference type="GO" id="GO:0061629">
    <property type="term" value="F:RNA polymerase II-specific DNA-binding transcription factor binding"/>
    <property type="evidence" value="ECO:0000266"/>
    <property type="project" value="RGD"/>
</dbReference>
<dbReference type="GO" id="GO:0005102">
    <property type="term" value="F:signaling receptor binding"/>
    <property type="evidence" value="ECO:0000318"/>
    <property type="project" value="GO_Central"/>
</dbReference>
<dbReference type="GO" id="GO:0006915">
    <property type="term" value="P:apoptotic process"/>
    <property type="evidence" value="ECO:0007669"/>
    <property type="project" value="UniProtKB-KW"/>
</dbReference>
<dbReference type="GO" id="GO:0031397">
    <property type="term" value="P:negative regulation of protein ubiquitination"/>
    <property type="evidence" value="ECO:0000250"/>
    <property type="project" value="UniProtKB"/>
</dbReference>
<dbReference type="GO" id="GO:0045944">
    <property type="term" value="P:positive regulation of transcription by RNA polymerase II"/>
    <property type="evidence" value="ECO:0000266"/>
    <property type="project" value="RGD"/>
</dbReference>
<dbReference type="GO" id="GO:0007165">
    <property type="term" value="P:signal transduction"/>
    <property type="evidence" value="ECO:0000318"/>
    <property type="project" value="GO_Central"/>
</dbReference>
<dbReference type="InterPro" id="IPR007623">
    <property type="entry name" value="BEX"/>
</dbReference>
<dbReference type="InterPro" id="IPR021156">
    <property type="entry name" value="TF_A-like/BEX"/>
</dbReference>
<dbReference type="PANTHER" id="PTHR19430:SF3">
    <property type="entry name" value="PROTEIN BEX1"/>
    <property type="match status" value="1"/>
</dbReference>
<dbReference type="PANTHER" id="PTHR19430">
    <property type="entry name" value="PROTEIN BEX1-RELATED"/>
    <property type="match status" value="1"/>
</dbReference>
<dbReference type="Pfam" id="PF04538">
    <property type="entry name" value="BEX"/>
    <property type="match status" value="1"/>
</dbReference>
<dbReference type="PIRSF" id="PIRSF008633">
    <property type="entry name" value="BEX"/>
    <property type="match status" value="1"/>
</dbReference>